<proteinExistence type="evidence at transcript level"/>
<evidence type="ECO:0000250" key="1"/>
<evidence type="ECO:0000256" key="2">
    <source>
        <dbReference type="SAM" id="MobiDB-lite"/>
    </source>
</evidence>
<evidence type="ECO:0000305" key="3"/>
<keyword id="KW-0963">Cytoplasm</keyword>
<keyword id="KW-0687">Ribonucleoprotein</keyword>
<keyword id="KW-0689">Ribosomal protein</keyword>
<keyword id="KW-0694">RNA-binding</keyword>
<keyword id="KW-0699">rRNA-binding</keyword>
<comment type="function">
    <text evidence="1">Located at the top of the head of the 40S subunit, it contacts several helices of the 18S rRNA.</text>
</comment>
<comment type="subcellular location">
    <subcellularLocation>
        <location>Cytoplasm</location>
    </subcellularLocation>
</comment>
<comment type="similarity">
    <text evidence="3">Belongs to the universal ribosomal protein uS13 family.</text>
</comment>
<accession>Q962R1</accession>
<sequence length="152" mass="17741">MSLVIPDKFQHILRIMNTNIDGKRKVMFAMTAIKGVGRRYSNIVLKKADIDLDKRAGECTEEEVEKIVTIMSNPRQYKIPDWFLNRQKDIVDGKYSQLTSSNLDSKLREDLERLKKIRAHRGMRHYWGLRVRGQHTKTTGRRGRTVGVSKKK</sequence>
<reference key="1">
    <citation type="journal article" date="2003" name="Bioinformatics">
        <title>Annotation pattern of ESTs from Spodoptera frugiperda Sf9 cells and analysis of the ribosomal protein genes reveal insect-specific features and unexpectedly low codon usage bias.</title>
        <authorList>
            <person name="Landais I."/>
            <person name="Ogliastro M."/>
            <person name="Mita K."/>
            <person name="Nohata J."/>
            <person name="Lopez-Ferber M."/>
            <person name="Duonor-Cerutti M."/>
            <person name="Shimada T."/>
            <person name="Fournier P."/>
            <person name="Devauchelle G."/>
        </authorList>
    </citation>
    <scope>NUCLEOTIDE SEQUENCE [LARGE SCALE MRNA]</scope>
</reference>
<gene>
    <name type="primary">RpS18</name>
</gene>
<dbReference type="EMBL" id="AF400215">
    <property type="protein sequence ID" value="AAK92187.1"/>
    <property type="molecule type" value="mRNA"/>
</dbReference>
<dbReference type="SMR" id="Q962R1"/>
<dbReference type="EnsemblMetazoa" id="XM_035590486.2">
    <property type="protein sequence ID" value="XP_035446379.1"/>
    <property type="gene ID" value="LOC118273494"/>
</dbReference>
<dbReference type="OrthoDB" id="1702480at2759"/>
<dbReference type="Proteomes" id="UP000829999">
    <property type="component" value="Unplaced"/>
</dbReference>
<dbReference type="GO" id="GO:0005829">
    <property type="term" value="C:cytosol"/>
    <property type="evidence" value="ECO:0007669"/>
    <property type="project" value="TreeGrafter"/>
</dbReference>
<dbReference type="GO" id="GO:0015935">
    <property type="term" value="C:small ribosomal subunit"/>
    <property type="evidence" value="ECO:0007669"/>
    <property type="project" value="TreeGrafter"/>
</dbReference>
<dbReference type="GO" id="GO:0019843">
    <property type="term" value="F:rRNA binding"/>
    <property type="evidence" value="ECO:0007669"/>
    <property type="project" value="UniProtKB-KW"/>
</dbReference>
<dbReference type="GO" id="GO:0003735">
    <property type="term" value="F:structural constituent of ribosome"/>
    <property type="evidence" value="ECO:0007669"/>
    <property type="project" value="InterPro"/>
</dbReference>
<dbReference type="GO" id="GO:0006412">
    <property type="term" value="P:translation"/>
    <property type="evidence" value="ECO:0007669"/>
    <property type="project" value="InterPro"/>
</dbReference>
<dbReference type="FunFam" id="1.10.8.50:FF:000002">
    <property type="entry name" value="40S ribosomal protein S18"/>
    <property type="match status" value="1"/>
</dbReference>
<dbReference type="FunFam" id="4.10.910.10:FF:000002">
    <property type="entry name" value="40S ribosomal protein S18"/>
    <property type="match status" value="1"/>
</dbReference>
<dbReference type="Gene3D" id="1.10.8.50">
    <property type="match status" value="1"/>
</dbReference>
<dbReference type="Gene3D" id="4.10.910.10">
    <property type="entry name" value="30s ribosomal protein s13, domain 2"/>
    <property type="match status" value="1"/>
</dbReference>
<dbReference type="HAMAP" id="MF_01315">
    <property type="entry name" value="Ribosomal_uS13"/>
    <property type="match status" value="1"/>
</dbReference>
<dbReference type="InterPro" id="IPR027437">
    <property type="entry name" value="Rbsml_uS13_C"/>
</dbReference>
<dbReference type="InterPro" id="IPR001892">
    <property type="entry name" value="Ribosomal_uS13"/>
</dbReference>
<dbReference type="InterPro" id="IPR010979">
    <property type="entry name" value="Ribosomal_uS13-like_H2TH"/>
</dbReference>
<dbReference type="InterPro" id="IPR018269">
    <property type="entry name" value="Ribosomal_uS13_CS"/>
</dbReference>
<dbReference type="NCBIfam" id="NF003140">
    <property type="entry name" value="PRK04053.1"/>
    <property type="match status" value="1"/>
</dbReference>
<dbReference type="PANTHER" id="PTHR10871">
    <property type="entry name" value="30S RIBOSOMAL PROTEIN S13/40S RIBOSOMAL PROTEIN S18"/>
    <property type="match status" value="1"/>
</dbReference>
<dbReference type="PANTHER" id="PTHR10871:SF3">
    <property type="entry name" value="SMALL RIBOSOMAL SUBUNIT PROTEIN US13"/>
    <property type="match status" value="1"/>
</dbReference>
<dbReference type="Pfam" id="PF00416">
    <property type="entry name" value="Ribosomal_S13"/>
    <property type="match status" value="1"/>
</dbReference>
<dbReference type="PIRSF" id="PIRSF002134">
    <property type="entry name" value="Ribosomal_S13"/>
    <property type="match status" value="1"/>
</dbReference>
<dbReference type="SUPFAM" id="SSF46946">
    <property type="entry name" value="S13-like H2TH domain"/>
    <property type="match status" value="1"/>
</dbReference>
<dbReference type="PROSITE" id="PS00646">
    <property type="entry name" value="RIBOSOMAL_S13_1"/>
    <property type="match status" value="1"/>
</dbReference>
<dbReference type="PROSITE" id="PS50159">
    <property type="entry name" value="RIBOSOMAL_S13_2"/>
    <property type="match status" value="1"/>
</dbReference>
<protein>
    <recommendedName>
        <fullName evidence="3">Small ribosomal subunit protein uS13</fullName>
    </recommendedName>
    <alternativeName>
        <fullName>40S ribosomal protein S18</fullName>
    </alternativeName>
</protein>
<name>RS18_SPOFR</name>
<feature type="chain" id="PRO_0000132221" description="Small ribosomal subunit protein uS13">
    <location>
        <begin position="1"/>
        <end position="152"/>
    </location>
</feature>
<feature type="region of interest" description="Disordered" evidence="2">
    <location>
        <begin position="133"/>
        <end position="152"/>
    </location>
</feature>
<organism>
    <name type="scientific">Spodoptera frugiperda</name>
    <name type="common">Fall armyworm</name>
    <dbReference type="NCBI Taxonomy" id="7108"/>
    <lineage>
        <taxon>Eukaryota</taxon>
        <taxon>Metazoa</taxon>
        <taxon>Ecdysozoa</taxon>
        <taxon>Arthropoda</taxon>
        <taxon>Hexapoda</taxon>
        <taxon>Insecta</taxon>
        <taxon>Pterygota</taxon>
        <taxon>Neoptera</taxon>
        <taxon>Endopterygota</taxon>
        <taxon>Lepidoptera</taxon>
        <taxon>Glossata</taxon>
        <taxon>Ditrysia</taxon>
        <taxon>Noctuoidea</taxon>
        <taxon>Noctuidae</taxon>
        <taxon>Amphipyrinae</taxon>
        <taxon>Spodoptera</taxon>
    </lineage>
</organism>